<dbReference type="EMBL" id="CP000825">
    <property type="protein sequence ID" value="ABV49955.1"/>
    <property type="molecule type" value="Genomic_DNA"/>
</dbReference>
<dbReference type="RefSeq" id="WP_012007109.1">
    <property type="nucleotide sequence ID" value="NC_009840.1"/>
</dbReference>
<dbReference type="SMR" id="A8G2X4"/>
<dbReference type="STRING" id="93060.P9215_03381"/>
<dbReference type="KEGG" id="pmh:P9215_03381"/>
<dbReference type="eggNOG" id="COG1327">
    <property type="taxonomic scope" value="Bacteria"/>
</dbReference>
<dbReference type="HOGENOM" id="CLU_108412_0_0_3"/>
<dbReference type="OrthoDB" id="9807461at2"/>
<dbReference type="Proteomes" id="UP000002014">
    <property type="component" value="Chromosome"/>
</dbReference>
<dbReference type="GO" id="GO:0005524">
    <property type="term" value="F:ATP binding"/>
    <property type="evidence" value="ECO:0007669"/>
    <property type="project" value="UniProtKB-KW"/>
</dbReference>
<dbReference type="GO" id="GO:0003677">
    <property type="term" value="F:DNA binding"/>
    <property type="evidence" value="ECO:0007669"/>
    <property type="project" value="UniProtKB-KW"/>
</dbReference>
<dbReference type="GO" id="GO:0008270">
    <property type="term" value="F:zinc ion binding"/>
    <property type="evidence" value="ECO:0007669"/>
    <property type="project" value="UniProtKB-UniRule"/>
</dbReference>
<dbReference type="GO" id="GO:0045892">
    <property type="term" value="P:negative regulation of DNA-templated transcription"/>
    <property type="evidence" value="ECO:0007669"/>
    <property type="project" value="UniProtKB-UniRule"/>
</dbReference>
<dbReference type="HAMAP" id="MF_00440">
    <property type="entry name" value="NrdR"/>
    <property type="match status" value="1"/>
</dbReference>
<dbReference type="InterPro" id="IPR005144">
    <property type="entry name" value="ATP-cone_dom"/>
</dbReference>
<dbReference type="InterPro" id="IPR055173">
    <property type="entry name" value="NrdR-like_N"/>
</dbReference>
<dbReference type="InterPro" id="IPR003796">
    <property type="entry name" value="RNR_NrdR-like"/>
</dbReference>
<dbReference type="NCBIfam" id="TIGR00244">
    <property type="entry name" value="transcriptional regulator NrdR"/>
    <property type="match status" value="1"/>
</dbReference>
<dbReference type="PANTHER" id="PTHR30455">
    <property type="entry name" value="TRANSCRIPTIONAL REPRESSOR NRDR"/>
    <property type="match status" value="1"/>
</dbReference>
<dbReference type="PANTHER" id="PTHR30455:SF2">
    <property type="entry name" value="TRANSCRIPTIONAL REPRESSOR NRDR"/>
    <property type="match status" value="1"/>
</dbReference>
<dbReference type="Pfam" id="PF03477">
    <property type="entry name" value="ATP-cone"/>
    <property type="match status" value="1"/>
</dbReference>
<dbReference type="Pfam" id="PF22811">
    <property type="entry name" value="Zn_ribbon_NrdR"/>
    <property type="match status" value="1"/>
</dbReference>
<dbReference type="PROSITE" id="PS51161">
    <property type="entry name" value="ATP_CONE"/>
    <property type="match status" value="1"/>
</dbReference>
<gene>
    <name evidence="1" type="primary">nrdR</name>
    <name type="ordered locus">P9215_03381</name>
</gene>
<feature type="chain" id="PRO_1000080797" description="Transcriptional repressor NrdR">
    <location>
        <begin position="1"/>
        <end position="159"/>
    </location>
</feature>
<feature type="domain" description="ATP-cone" evidence="1">
    <location>
        <begin position="49"/>
        <end position="139"/>
    </location>
</feature>
<feature type="zinc finger region" evidence="1">
    <location>
        <begin position="3"/>
        <end position="34"/>
    </location>
</feature>
<feature type="region of interest" description="Disordered" evidence="2">
    <location>
        <begin position="1"/>
        <end position="21"/>
    </location>
</feature>
<feature type="compositionally biased region" description="Polar residues" evidence="2">
    <location>
        <begin position="1"/>
        <end position="11"/>
    </location>
</feature>
<accession>A8G2X4</accession>
<reference key="1">
    <citation type="journal article" date="2007" name="PLoS Genet.">
        <title>Patterns and implications of gene gain and loss in the evolution of Prochlorococcus.</title>
        <authorList>
            <person name="Kettler G.C."/>
            <person name="Martiny A.C."/>
            <person name="Huang K."/>
            <person name="Zucker J."/>
            <person name="Coleman M.L."/>
            <person name="Rodrigue S."/>
            <person name="Chen F."/>
            <person name="Lapidus A."/>
            <person name="Ferriera S."/>
            <person name="Johnson J."/>
            <person name="Steglich C."/>
            <person name="Church G.M."/>
            <person name="Richardson P."/>
            <person name="Chisholm S.W."/>
        </authorList>
    </citation>
    <scope>NUCLEOTIDE SEQUENCE [LARGE SCALE GENOMIC DNA]</scope>
    <source>
        <strain>MIT 9215</strain>
    </source>
</reference>
<organism>
    <name type="scientific">Prochlorococcus marinus (strain MIT 9215)</name>
    <dbReference type="NCBI Taxonomy" id="93060"/>
    <lineage>
        <taxon>Bacteria</taxon>
        <taxon>Bacillati</taxon>
        <taxon>Cyanobacteriota</taxon>
        <taxon>Cyanophyceae</taxon>
        <taxon>Synechococcales</taxon>
        <taxon>Prochlorococcaceae</taxon>
        <taxon>Prochlorococcus</taxon>
    </lineage>
</organism>
<name>NRDR_PROM2</name>
<comment type="function">
    <text evidence="1">Negatively regulates transcription of bacterial ribonucleotide reductase nrd genes and operons by binding to NrdR-boxes.</text>
</comment>
<comment type="cofactor">
    <cofactor evidence="1">
        <name>Zn(2+)</name>
        <dbReference type="ChEBI" id="CHEBI:29105"/>
    </cofactor>
    <text evidence="1">Binds 1 zinc ion.</text>
</comment>
<comment type="similarity">
    <text evidence="1">Belongs to the NrdR family.</text>
</comment>
<protein>
    <recommendedName>
        <fullName evidence="1">Transcriptional repressor NrdR</fullName>
    </recommendedName>
</protein>
<keyword id="KW-0067">ATP-binding</keyword>
<keyword id="KW-0238">DNA-binding</keyword>
<keyword id="KW-0479">Metal-binding</keyword>
<keyword id="KW-0547">Nucleotide-binding</keyword>
<keyword id="KW-0678">Repressor</keyword>
<keyword id="KW-0804">Transcription</keyword>
<keyword id="KW-0805">Transcription regulation</keyword>
<keyword id="KW-0862">Zinc</keyword>
<keyword id="KW-0863">Zinc-finger</keyword>
<sequence length="159" mass="18074">MQCPTCQNTDSRVLESRSADSGKSVRRRRECLNCSFRFTTYERVESMPVSVMKKDGSRELFDKQKLFTGISRACEKTNFSSEAIINFVDGIESQIVQDSNKDIKSSQIGELILKNLRKENEVAYIRYASVYRKFNGVKDFISTLESLKGSSKNQLASIS</sequence>
<evidence type="ECO:0000255" key="1">
    <source>
        <dbReference type="HAMAP-Rule" id="MF_00440"/>
    </source>
</evidence>
<evidence type="ECO:0000256" key="2">
    <source>
        <dbReference type="SAM" id="MobiDB-lite"/>
    </source>
</evidence>
<proteinExistence type="inferred from homology"/>